<sequence length="1135" mass="131571">MATSYSANNGQNEEYTFDAFEDGSSKLVGEQQLTKLNQFAVDYAQQIWKIEEALDETLNEVWDINIDPVSIYNKPHEQLDLIELVKTDHKIFNKVILVFSSICNQTRILKETAESKFYSPLTVFGEITGESSEGDVQIEVGKLLPFMIDLSAFVNRCYSLIRNIISQFASIYQSQKNIHTQFFKNVHLQAVYYSMIDIFSVLINLDSIITQNTALDSSWGRYLRMVKSVKQEPNKYSVSGEEDKLWQLEKLLLSLKGQLLEGFIFQSCIQQEFDFPGVIDVKGNKVLKAEFQYNVKVLWSMFGTKIMDSSELNLRERFPGFMGLYAFYIALFKDITDKSFFKQVWEVTKRVPMVSINVNVFWFPADFIQQLMPGMIKIVGSTFNHMEIRRDYLRNVDKEFSGRVKSYYLQVSRWMVRMESSQTRGGTLWDVSLSKVGQIIQGVQLSYHISHLLKTMIGLHMHLTAPLKSSDVRKLFQCAEMLKSIENTFHRRSAMISAHISMMVQQLTDIINEKLNVVRSKYAGRSNYSEIELDVIVALSLCSDLLCGVATNERITVVRLCLNVIYQSNILKENDIEELRLHIKRLEFISDIGKIVKASCDCSILFWSRDLFPTYLQFLYQNPSQATSLQYTLTGLKDVVSVLDKAIHVDNAKQRLIDVYRNEMEEMIDKNIIQPLGKDVETDLRLHIHAFLNIEEKDPFKTGIKEFGKFLELKPLRFFDRTIDIKSRISHYLDQTFYNLNTVALFDWKTYSEMRNMAFYKYGLQLLEVHLPGSTLEQGLDVLEIMRNIHIFVSRYNYNLNNQIFIQRSSNSKTLNTINITHISNSIRTHGSGIMNTTINFAYRFLVQKFSIFSEFLFDDQIKSKLYKNIKYFRENKEQLNNMYPSELVTELERDIRQLGVSETGLTFLDHFRLLITHIGNAMGYIRLVRSGGLHYCSNAIKFVPDLKKIPKFQDLTSKDALSPETIQASTNLDSIIHNLSNNLSEGTEYFKMLVNVFATEFRNIANQHLKNFYIIVPALASNYIDHMINSKDKLFKKSKAIGAEALLFTDDGFAIGLAYILKLLDQNKDFDSLHWFDRIQLKCETDQKRMLAEANAKGIKEDQNHLAIKKIQNFQQEYELFKYSFSGSRIFFKD</sequence>
<feature type="initiator methionine" description="Removed" evidence="2">
    <location>
        <position position="1"/>
    </location>
</feature>
<feature type="chain" id="PRO_0000356843" description="WASH complex subunit 4">
    <location>
        <begin position="2"/>
        <end position="1135"/>
    </location>
</feature>
<feature type="modified residue" description="N-acetylalanine" evidence="2">
    <location>
        <position position="2"/>
    </location>
</feature>
<reference key="1">
    <citation type="journal article" date="2005" name="Nature">
        <title>The genome of the social amoeba Dictyostelium discoideum.</title>
        <authorList>
            <person name="Eichinger L."/>
            <person name="Pachebat J.A."/>
            <person name="Gloeckner G."/>
            <person name="Rajandream M.A."/>
            <person name="Sucgang R."/>
            <person name="Berriman M."/>
            <person name="Song J."/>
            <person name="Olsen R."/>
            <person name="Szafranski K."/>
            <person name="Xu Q."/>
            <person name="Tunggal B."/>
            <person name="Kummerfeld S."/>
            <person name="Madera M."/>
            <person name="Konfortov B.A."/>
            <person name="Rivero F."/>
            <person name="Bankier A.T."/>
            <person name="Lehmann R."/>
            <person name="Hamlin N."/>
            <person name="Davies R."/>
            <person name="Gaudet P."/>
            <person name="Fey P."/>
            <person name="Pilcher K."/>
            <person name="Chen G."/>
            <person name="Saunders D."/>
            <person name="Sodergren E.J."/>
            <person name="Davis P."/>
            <person name="Kerhornou A."/>
            <person name="Nie X."/>
            <person name="Hall N."/>
            <person name="Anjard C."/>
            <person name="Hemphill L."/>
            <person name="Bason N."/>
            <person name="Farbrother P."/>
            <person name="Desany B."/>
            <person name="Just E."/>
            <person name="Morio T."/>
            <person name="Rost R."/>
            <person name="Churcher C.M."/>
            <person name="Cooper J."/>
            <person name="Haydock S."/>
            <person name="van Driessche N."/>
            <person name="Cronin A."/>
            <person name="Goodhead I."/>
            <person name="Muzny D.M."/>
            <person name="Mourier T."/>
            <person name="Pain A."/>
            <person name="Lu M."/>
            <person name="Harper D."/>
            <person name="Lindsay R."/>
            <person name="Hauser H."/>
            <person name="James K.D."/>
            <person name="Quiles M."/>
            <person name="Madan Babu M."/>
            <person name="Saito T."/>
            <person name="Buchrieser C."/>
            <person name="Wardroper A."/>
            <person name="Felder M."/>
            <person name="Thangavelu M."/>
            <person name="Johnson D."/>
            <person name="Knights A."/>
            <person name="Loulseged H."/>
            <person name="Mungall K.L."/>
            <person name="Oliver K."/>
            <person name="Price C."/>
            <person name="Quail M.A."/>
            <person name="Urushihara H."/>
            <person name="Hernandez J."/>
            <person name="Rabbinowitsch E."/>
            <person name="Steffen D."/>
            <person name="Sanders M."/>
            <person name="Ma J."/>
            <person name="Kohara Y."/>
            <person name="Sharp S."/>
            <person name="Simmonds M.N."/>
            <person name="Spiegler S."/>
            <person name="Tivey A."/>
            <person name="Sugano S."/>
            <person name="White B."/>
            <person name="Walker D."/>
            <person name="Woodward J.R."/>
            <person name="Winckler T."/>
            <person name="Tanaka Y."/>
            <person name="Shaulsky G."/>
            <person name="Schleicher M."/>
            <person name="Weinstock G.M."/>
            <person name="Rosenthal A."/>
            <person name="Cox E.C."/>
            <person name="Chisholm R.L."/>
            <person name="Gibbs R.A."/>
            <person name="Loomis W.F."/>
            <person name="Platzer M."/>
            <person name="Kay R.R."/>
            <person name="Williams J.G."/>
            <person name="Dear P.H."/>
            <person name="Noegel A.A."/>
            <person name="Barrell B.G."/>
            <person name="Kuspa A."/>
        </authorList>
    </citation>
    <scope>NUCLEOTIDE SEQUENCE [LARGE SCALE GENOMIC DNA]</scope>
    <source>
        <strain>AX4</strain>
    </source>
</reference>
<reference key="2">
    <citation type="submission" date="2008-10" db="UniProtKB">
        <authorList>
            <person name="Bienvenut W.V."/>
            <person name="Sumpton D."/>
            <person name="Ura S."/>
            <person name="Insall R.H."/>
        </authorList>
    </citation>
    <scope>PROTEIN SEQUENCE OF 2-35; 286-296; 378-389; 425-435; 475-483; 814-828 AND 993-1003</scope>
    <scope>CLEAVAGE OF INITIATOR METHIONINE</scope>
    <scope>ACETYLATION AT ALA-2</scope>
    <scope>IDENTIFICATION BY MASS SPECTROMETRY</scope>
    <source>
        <strain>AX2</strain>
    </source>
</reference>
<organism>
    <name type="scientific">Dictyostelium discoideum</name>
    <name type="common">Social amoeba</name>
    <dbReference type="NCBI Taxonomy" id="44689"/>
    <lineage>
        <taxon>Eukaryota</taxon>
        <taxon>Amoebozoa</taxon>
        <taxon>Evosea</taxon>
        <taxon>Eumycetozoa</taxon>
        <taxon>Dictyostelia</taxon>
        <taxon>Dictyosteliales</taxon>
        <taxon>Dictyosteliaceae</taxon>
        <taxon>Dictyostelium</taxon>
    </lineage>
</organism>
<keyword id="KW-0007">Acetylation</keyword>
<keyword id="KW-0903">Direct protein sequencing</keyword>
<keyword id="KW-1185">Reference proteome</keyword>
<comment type="subunit">
    <text evidence="1">Probable component of the WASH complex.</text>
</comment>
<comment type="similarity">
    <text evidence="3">Belongs to the SWIP family.</text>
</comment>
<gene>
    <name evidence="1" type="primary">washc4</name>
    <name type="ORF">DDB_G0283355</name>
</gene>
<dbReference type="EMBL" id="AAFI02000054">
    <property type="protein sequence ID" value="EAL65754.1"/>
    <property type="molecule type" value="Genomic_DNA"/>
</dbReference>
<dbReference type="RefSeq" id="XP_639109.1">
    <property type="nucleotide sequence ID" value="XM_634017.1"/>
</dbReference>
<dbReference type="SMR" id="Q54R74"/>
<dbReference type="FunCoup" id="Q54R74">
    <property type="interactions" value="349"/>
</dbReference>
<dbReference type="STRING" id="44689.Q54R74"/>
<dbReference type="PaxDb" id="44689-DDB0234041"/>
<dbReference type="EnsemblProtists" id="EAL65754">
    <property type="protein sequence ID" value="EAL65754"/>
    <property type="gene ID" value="DDB_G0283355"/>
</dbReference>
<dbReference type="GeneID" id="8624042"/>
<dbReference type="KEGG" id="ddi:DDB_G0283355"/>
<dbReference type="dictyBase" id="DDB_G0283355">
    <property type="gene designation" value="swip"/>
</dbReference>
<dbReference type="VEuPathDB" id="AmoebaDB:DDB_G0283355"/>
<dbReference type="eggNOG" id="KOG3578">
    <property type="taxonomic scope" value="Eukaryota"/>
</dbReference>
<dbReference type="HOGENOM" id="CLU_002451_0_0_1"/>
<dbReference type="InParanoid" id="Q54R74"/>
<dbReference type="OMA" id="RCNIFIQ"/>
<dbReference type="PhylomeDB" id="Q54R74"/>
<dbReference type="PRO" id="PR:Q54R74"/>
<dbReference type="Proteomes" id="UP000002195">
    <property type="component" value="Chromosome 4"/>
</dbReference>
<dbReference type="GO" id="GO:0005768">
    <property type="term" value="C:endosome"/>
    <property type="evidence" value="ECO:0000318"/>
    <property type="project" value="GO_Central"/>
</dbReference>
<dbReference type="GO" id="GO:0061474">
    <property type="term" value="C:phagolysosome membrane"/>
    <property type="evidence" value="ECO:0000314"/>
    <property type="project" value="dictyBase"/>
</dbReference>
<dbReference type="GO" id="GO:0071203">
    <property type="term" value="C:WASH complex"/>
    <property type="evidence" value="ECO:0000314"/>
    <property type="project" value="dictyBase"/>
</dbReference>
<dbReference type="GO" id="GO:0030041">
    <property type="term" value="P:actin filament polymerization"/>
    <property type="evidence" value="ECO:0000315"/>
    <property type="project" value="dictyBase"/>
</dbReference>
<dbReference type="GO" id="GO:0016197">
    <property type="term" value="P:endosomal transport"/>
    <property type="evidence" value="ECO:0000318"/>
    <property type="project" value="GO_Central"/>
</dbReference>
<dbReference type="GO" id="GO:0007032">
    <property type="term" value="P:endosome organization"/>
    <property type="evidence" value="ECO:0000318"/>
    <property type="project" value="GO_Central"/>
</dbReference>
<dbReference type="GO" id="GO:0006887">
    <property type="term" value="P:exocytosis"/>
    <property type="evidence" value="ECO:0000315"/>
    <property type="project" value="dictyBase"/>
</dbReference>
<dbReference type="GO" id="GO:0044655">
    <property type="term" value="P:phagosome reneutralization"/>
    <property type="evidence" value="ECO:0000315"/>
    <property type="project" value="dictyBase"/>
</dbReference>
<dbReference type="GO" id="GO:0061462">
    <property type="term" value="P:protein localization to lysosome"/>
    <property type="evidence" value="ECO:0000315"/>
    <property type="project" value="dictyBase"/>
</dbReference>
<dbReference type="InterPro" id="IPR028191">
    <property type="entry name" value="WASH-4_N"/>
</dbReference>
<dbReference type="InterPro" id="IPR028283">
    <property type="entry name" value="WASH-7_C"/>
</dbReference>
<dbReference type="InterPro" id="IPR028282">
    <property type="entry name" value="WASH-7_central"/>
</dbReference>
<dbReference type="InterPro" id="IPR027307">
    <property type="entry name" value="WASH7"/>
</dbReference>
<dbReference type="PANTHER" id="PTHR31409">
    <property type="entry name" value="WASH COMPLEX SUBUNIT 4"/>
    <property type="match status" value="1"/>
</dbReference>
<dbReference type="PANTHER" id="PTHR31409:SF0">
    <property type="entry name" value="WASH COMPLEX SUBUNIT 4"/>
    <property type="match status" value="1"/>
</dbReference>
<dbReference type="Pfam" id="PF14745">
    <property type="entry name" value="WASH-4_N"/>
    <property type="match status" value="1"/>
</dbReference>
<dbReference type="Pfam" id="PF14746">
    <property type="entry name" value="WASH-7_C"/>
    <property type="match status" value="1"/>
</dbReference>
<dbReference type="Pfam" id="PF14744">
    <property type="entry name" value="WASH-7_mid"/>
    <property type="match status" value="1"/>
</dbReference>
<evidence type="ECO:0000250" key="1">
    <source>
        <dbReference type="UniProtKB" id="Q2M389"/>
    </source>
</evidence>
<evidence type="ECO:0000269" key="2">
    <source ref="2"/>
</evidence>
<evidence type="ECO:0000305" key="3"/>
<accession>Q54R74</accession>
<proteinExistence type="evidence at protein level"/>
<name>WASC4_DICDI</name>
<protein>
    <recommendedName>
        <fullName evidence="1">WASH complex subunit 4</fullName>
    </recommendedName>
    <alternativeName>
        <fullName>WASH complex subunit SWIP homolog</fullName>
    </alternativeName>
</protein>